<proteinExistence type="evidence at protein level"/>
<organism>
    <name type="scientific">Cyriopagopus hainanus</name>
    <name type="common">Chinese bird spider</name>
    <name type="synonym">Haplopelma hainanum</name>
    <dbReference type="NCBI Taxonomy" id="209901"/>
    <lineage>
        <taxon>Eukaryota</taxon>
        <taxon>Metazoa</taxon>
        <taxon>Ecdysozoa</taxon>
        <taxon>Arthropoda</taxon>
        <taxon>Chelicerata</taxon>
        <taxon>Arachnida</taxon>
        <taxon>Araneae</taxon>
        <taxon>Mygalomorphae</taxon>
        <taxon>Theraphosidae</taxon>
        <taxon>Haplopelma</taxon>
    </lineage>
</organism>
<dbReference type="EMBL" id="GU292930">
    <property type="protein sequence ID" value="ADB56746.1"/>
    <property type="molecule type" value="mRNA"/>
</dbReference>
<dbReference type="EMBL" id="GU293126">
    <property type="protein sequence ID" value="ADB56942.1"/>
    <property type="molecule type" value="Genomic_DNA"/>
</dbReference>
<dbReference type="ArachnoServer" id="AS001592">
    <property type="toxin name" value="U11-theraphotoxin-Hhn1a"/>
</dbReference>
<dbReference type="GO" id="GO:0005576">
    <property type="term" value="C:extracellular region"/>
    <property type="evidence" value="ECO:0007669"/>
    <property type="project" value="UniProtKB-SubCell"/>
</dbReference>
<dbReference type="GO" id="GO:0019871">
    <property type="term" value="F:sodium channel inhibitor activity"/>
    <property type="evidence" value="ECO:0007669"/>
    <property type="project" value="InterPro"/>
</dbReference>
<dbReference type="GO" id="GO:0090729">
    <property type="term" value="F:toxin activity"/>
    <property type="evidence" value="ECO:0007669"/>
    <property type="project" value="UniProtKB-KW"/>
</dbReference>
<dbReference type="InterPro" id="IPR012627">
    <property type="entry name" value="Toxin_22"/>
</dbReference>
<dbReference type="Pfam" id="PF08092">
    <property type="entry name" value="Toxin_22"/>
    <property type="match status" value="1"/>
</dbReference>
<accession>D2Y253</accession>
<comment type="function">
    <text evidence="1">Probable ion channel inhibitor.</text>
</comment>
<comment type="subcellular location">
    <subcellularLocation>
        <location>Secreted</location>
    </subcellularLocation>
</comment>
<comment type="tissue specificity">
    <text>Expressed by the venom gland.</text>
</comment>
<comment type="domain">
    <text evidence="1">The presence of a 'disulfide through disulfide knot' structurally defines this protein as a knottin.</text>
</comment>
<comment type="similarity">
    <text evidence="5">Belongs to the neurotoxin 14 (magi-1) family. 01 (HNTX-16) subfamily.</text>
</comment>
<sequence length="113" mass="13089">MNTVRVTFLLVFVLAVSLGQADKDENRMEMQEKTEQGKSYLDFAENLLLQKLEELEAKLLEEDSEESRNSRQKRCIGEGVPCDENDPRCCSGLVCLKPTLHGIWYKSYYCYKK</sequence>
<keyword id="KW-0903">Direct protein sequencing</keyword>
<keyword id="KW-1015">Disulfide bond</keyword>
<keyword id="KW-0872">Ion channel impairing toxin</keyword>
<keyword id="KW-0960">Knottin</keyword>
<keyword id="KW-0964">Secreted</keyword>
<keyword id="KW-0732">Signal</keyword>
<keyword id="KW-0800">Toxin</keyword>
<name>H16A1_CYRHA</name>
<evidence type="ECO:0000250" key="1"/>
<evidence type="ECO:0000255" key="2"/>
<evidence type="ECO:0000256" key="3">
    <source>
        <dbReference type="SAM" id="MobiDB-lite"/>
    </source>
</evidence>
<evidence type="ECO:0000269" key="4">
    <source>
    </source>
</evidence>
<evidence type="ECO:0000305" key="5"/>
<protein>
    <recommendedName>
        <fullName>U11-theraphotoxin-Hhn1a</fullName>
        <shortName>U11-TRTX-Hhn1a</shortName>
    </recommendedName>
    <alternativeName>
        <fullName>Hainantoxin-XVI</fullName>
        <shortName>HNTX-XVI</shortName>
    </alternativeName>
    <alternativeName>
        <fullName>Peptide F4-19.87</fullName>
    </alternativeName>
</protein>
<feature type="signal peptide" evidence="2">
    <location>
        <begin position="1"/>
        <end position="21"/>
    </location>
</feature>
<feature type="propeptide" id="PRO_0000400857" evidence="4">
    <location>
        <begin position="22"/>
        <end position="74"/>
    </location>
</feature>
<feature type="peptide" id="PRO_0000400858" description="U11-theraphotoxin-Hhn1a">
    <location>
        <begin position="75"/>
        <end position="113"/>
    </location>
</feature>
<feature type="region of interest" description="Disordered" evidence="3">
    <location>
        <begin position="61"/>
        <end position="83"/>
    </location>
</feature>
<feature type="disulfide bond" evidence="1">
    <location>
        <begin position="75"/>
        <end position="90"/>
    </location>
</feature>
<feature type="disulfide bond" evidence="1">
    <location>
        <begin position="82"/>
        <end position="95"/>
    </location>
</feature>
<feature type="disulfide bond" evidence="1">
    <location>
        <begin position="89"/>
        <end position="110"/>
    </location>
</feature>
<reference key="1">
    <citation type="journal article" date="2010" name="J. Proteome Res.">
        <title>Molecular diversification of peptide toxins from the tarantula Haplopelma hainanum (Ornithoctonus hainana) venom based on transcriptomic, peptidomic, and genomic analyses.</title>
        <authorList>
            <person name="Tang X."/>
            <person name="Zhang Y."/>
            <person name="Hu W."/>
            <person name="Xu D."/>
            <person name="Tao H."/>
            <person name="Yang X."/>
            <person name="Li Y."/>
            <person name="Jiang L."/>
            <person name="Liang S."/>
        </authorList>
    </citation>
    <scope>NUCLEOTIDE SEQUENCE [LARGE SCALE GENOMIC DNA / MRNA]</scope>
    <scope>PROTEIN SEQUENCE OF 75-113</scope>
    <scope>IDENTIFICATION BY MASS SPECTROMETRY</scope>
    <source>
        <tissue>Venom</tissue>
        <tissue>Venom gland</tissue>
    </source>
</reference>